<sequence length="420" mass="48092">MKKINILVPDLPESISDATVVKWHKKIGDTVHCDDNIVDIETDKVMLEVSSPCDGILQSILEKEGKVVISQQTLGEINKSTVVDNHLSNNHIIEKEDNLLKKEEKYITTEEKKEIEYLLKDNHKHLTPSMRRSVKIHNINNGFLNQVIETSKKTNFENIIKEEKKESNQILFNHNIFNANENNKNNNNKVTNRVKMTRLRQRIAERLLDSKNNTAMLTTFHEVNMKPIILLRKKYGEDFEKKHNVRIGFMSFFVKAVIQALKNFPEINAYIDQTDIVFYKNFDISIAISTPRGLITPVIRNADTMTMAEIEKKIKDFSIKGLQNKINIKELMGGNFTITNGGVFGSLMSTPIINPPQTAILGMHVIQERPVVVNGQIKILPMMYLALSYDHRLIDGKESVGFLINIKNILEDFNRIAIDV</sequence>
<reference key="1">
    <citation type="journal article" date="2000" name="Nature">
        <title>Genome sequence of the endocellular bacterial symbiont of aphids Buchnera sp. APS.</title>
        <authorList>
            <person name="Shigenobu S."/>
            <person name="Watanabe H."/>
            <person name="Hattori M."/>
            <person name="Sakaki Y."/>
            <person name="Ishikawa H."/>
        </authorList>
    </citation>
    <scope>NUCLEOTIDE SEQUENCE [LARGE SCALE GENOMIC DNA]</scope>
    <source>
        <strain>APS</strain>
    </source>
</reference>
<evidence type="ECO:0000250" key="1"/>
<evidence type="ECO:0000250" key="2">
    <source>
        <dbReference type="UniProtKB" id="P0AFG6"/>
    </source>
</evidence>
<evidence type="ECO:0000255" key="3">
    <source>
        <dbReference type="PROSITE-ProRule" id="PRU01066"/>
    </source>
</evidence>
<evidence type="ECO:0000305" key="4"/>
<accession>P57389</accession>
<name>ODO2_BUCAI</name>
<protein>
    <recommendedName>
        <fullName>Dihydrolipoyllysine-residue succinyltransferase component of 2-oxoglutarate dehydrogenase complex</fullName>
        <ecNumber evidence="2">2.3.1.61</ecNumber>
    </recommendedName>
    <alternativeName>
        <fullName>2-oxoglutarate dehydrogenase complex component E2</fullName>
        <shortName>OGDC-E2</shortName>
    </alternativeName>
    <alternativeName>
        <fullName>Dihydrolipoamide succinyltransferase component of 2-oxoglutarate dehydrogenase complex</fullName>
    </alternativeName>
</protein>
<organism>
    <name type="scientific">Buchnera aphidicola subsp. Acyrthosiphon pisum (strain APS)</name>
    <name type="common">Acyrthosiphon pisum symbiotic bacterium</name>
    <dbReference type="NCBI Taxonomy" id="107806"/>
    <lineage>
        <taxon>Bacteria</taxon>
        <taxon>Pseudomonadati</taxon>
        <taxon>Pseudomonadota</taxon>
        <taxon>Gammaproteobacteria</taxon>
        <taxon>Enterobacterales</taxon>
        <taxon>Erwiniaceae</taxon>
        <taxon>Buchnera</taxon>
    </lineage>
</organism>
<gene>
    <name type="primary">sucB</name>
    <name type="ordered locus">BU303</name>
</gene>
<comment type="function">
    <text evidence="2">E2 component of the 2-oxoglutarate dehydrogenase (OGDH) complex which catalyzes the second step in the conversion of 2-oxoglutarate to succinyl-CoA and CO(2).</text>
</comment>
<comment type="catalytic activity">
    <reaction evidence="2">
        <text>N(6)-[(R)-dihydrolipoyl]-L-lysyl-[protein] + succinyl-CoA = N(6)-[(R)-S(8)-succinyldihydrolipoyl]-L-lysyl-[protein] + CoA</text>
        <dbReference type="Rhea" id="RHEA:15213"/>
        <dbReference type="Rhea" id="RHEA-COMP:10475"/>
        <dbReference type="Rhea" id="RHEA-COMP:20092"/>
        <dbReference type="ChEBI" id="CHEBI:57287"/>
        <dbReference type="ChEBI" id="CHEBI:57292"/>
        <dbReference type="ChEBI" id="CHEBI:83100"/>
        <dbReference type="ChEBI" id="CHEBI:83120"/>
        <dbReference type="EC" id="2.3.1.61"/>
    </reaction>
</comment>
<comment type="cofactor">
    <cofactor evidence="1">
        <name>(R)-lipoate</name>
        <dbReference type="ChEBI" id="CHEBI:83088"/>
    </cofactor>
    <text evidence="1">Binds 1 lipoyl cofactor covalently.</text>
</comment>
<comment type="pathway">
    <text>Amino-acid degradation; L-lysine degradation via saccharopine pathway; glutaryl-CoA from L-lysine: step 6/6.</text>
</comment>
<comment type="subunit">
    <text evidence="2">Forms a 24-polypeptide structural core with octahedral symmetry. Part of the 2-oxoglutarate dehydrogenase (OGDH) complex composed of E1 (2-oxoglutarate dehydrogenase), E2 (dihydrolipoamide succinyltransferase) and E3 (dihydrolipoamide dehydrogenase); the complex contains multiple copies of the three enzymatic components (E1, E2 and E3).</text>
</comment>
<comment type="similarity">
    <text evidence="4">Belongs to the 2-oxoacid dehydrogenase family.</text>
</comment>
<keyword id="KW-0012">Acyltransferase</keyword>
<keyword id="KW-0450">Lipoyl</keyword>
<keyword id="KW-1185">Reference proteome</keyword>
<keyword id="KW-0808">Transferase</keyword>
<keyword id="KW-0816">Tricarboxylic acid cycle</keyword>
<dbReference type="EC" id="2.3.1.61" evidence="2"/>
<dbReference type="EMBL" id="BA000003">
    <property type="protein sequence ID" value="BAB13012.1"/>
    <property type="molecule type" value="Genomic_DNA"/>
</dbReference>
<dbReference type="RefSeq" id="NP_240126.1">
    <property type="nucleotide sequence ID" value="NC_002528.1"/>
</dbReference>
<dbReference type="RefSeq" id="WP_010896058.1">
    <property type="nucleotide sequence ID" value="NC_002528.1"/>
</dbReference>
<dbReference type="SMR" id="P57389"/>
<dbReference type="STRING" id="563178.BUAP5A_297"/>
<dbReference type="EnsemblBacteria" id="BAB13012">
    <property type="protein sequence ID" value="BAB13012"/>
    <property type="gene ID" value="BAB13012"/>
</dbReference>
<dbReference type="KEGG" id="buc:BU303"/>
<dbReference type="PATRIC" id="fig|107806.10.peg.314"/>
<dbReference type="eggNOG" id="COG0508">
    <property type="taxonomic scope" value="Bacteria"/>
</dbReference>
<dbReference type="HOGENOM" id="CLU_016733_0_0_6"/>
<dbReference type="UniPathway" id="UPA00868">
    <property type="reaction ID" value="UER00840"/>
</dbReference>
<dbReference type="Proteomes" id="UP000001806">
    <property type="component" value="Chromosome"/>
</dbReference>
<dbReference type="GO" id="GO:0005829">
    <property type="term" value="C:cytosol"/>
    <property type="evidence" value="ECO:0007669"/>
    <property type="project" value="TreeGrafter"/>
</dbReference>
<dbReference type="GO" id="GO:0045252">
    <property type="term" value="C:oxoglutarate dehydrogenase complex"/>
    <property type="evidence" value="ECO:0007669"/>
    <property type="project" value="InterPro"/>
</dbReference>
<dbReference type="GO" id="GO:0004149">
    <property type="term" value="F:dihydrolipoyllysine-residue succinyltransferase activity"/>
    <property type="evidence" value="ECO:0007669"/>
    <property type="project" value="UniProtKB-EC"/>
</dbReference>
<dbReference type="GO" id="GO:0033512">
    <property type="term" value="P:L-lysine catabolic process to acetyl-CoA via saccharopine"/>
    <property type="evidence" value="ECO:0007669"/>
    <property type="project" value="UniProtKB-UniPathway"/>
</dbReference>
<dbReference type="GO" id="GO:0006099">
    <property type="term" value="P:tricarboxylic acid cycle"/>
    <property type="evidence" value="ECO:0007669"/>
    <property type="project" value="UniProtKB-KW"/>
</dbReference>
<dbReference type="CDD" id="cd06849">
    <property type="entry name" value="lipoyl_domain"/>
    <property type="match status" value="1"/>
</dbReference>
<dbReference type="Gene3D" id="2.40.50.100">
    <property type="match status" value="1"/>
</dbReference>
<dbReference type="Gene3D" id="3.30.559.10">
    <property type="entry name" value="Chloramphenicol acetyltransferase-like domain"/>
    <property type="match status" value="1"/>
</dbReference>
<dbReference type="InterPro" id="IPR050537">
    <property type="entry name" value="2-oxoacid_dehydrogenase"/>
</dbReference>
<dbReference type="InterPro" id="IPR001078">
    <property type="entry name" value="2-oxoacid_DH_actylTfrase"/>
</dbReference>
<dbReference type="InterPro" id="IPR000089">
    <property type="entry name" value="Biotin_lipoyl"/>
</dbReference>
<dbReference type="InterPro" id="IPR023213">
    <property type="entry name" value="CAT-like_dom_sf"/>
</dbReference>
<dbReference type="InterPro" id="IPR011053">
    <property type="entry name" value="Single_hybrid_motif"/>
</dbReference>
<dbReference type="InterPro" id="IPR006255">
    <property type="entry name" value="SucB"/>
</dbReference>
<dbReference type="NCBIfam" id="NF004309">
    <property type="entry name" value="PRK05704.1"/>
    <property type="match status" value="1"/>
</dbReference>
<dbReference type="NCBIfam" id="TIGR01347">
    <property type="entry name" value="sucB"/>
    <property type="match status" value="1"/>
</dbReference>
<dbReference type="PANTHER" id="PTHR43416:SF5">
    <property type="entry name" value="DIHYDROLIPOYLLYSINE-RESIDUE SUCCINYLTRANSFERASE COMPONENT OF 2-OXOGLUTARATE DEHYDROGENASE COMPLEX, MITOCHONDRIAL"/>
    <property type="match status" value="1"/>
</dbReference>
<dbReference type="PANTHER" id="PTHR43416">
    <property type="entry name" value="DIHYDROLIPOYLLYSINE-RESIDUE SUCCINYLTRANSFERASE COMPONENT OF 2-OXOGLUTARATE DEHYDROGENASE COMPLEX, MITOCHONDRIAL-RELATED"/>
    <property type="match status" value="1"/>
</dbReference>
<dbReference type="Pfam" id="PF00198">
    <property type="entry name" value="2-oxoacid_dh"/>
    <property type="match status" value="1"/>
</dbReference>
<dbReference type="Pfam" id="PF00364">
    <property type="entry name" value="Biotin_lipoyl"/>
    <property type="match status" value="1"/>
</dbReference>
<dbReference type="SUPFAM" id="SSF52777">
    <property type="entry name" value="CoA-dependent acyltransferases"/>
    <property type="match status" value="1"/>
</dbReference>
<dbReference type="SUPFAM" id="SSF51230">
    <property type="entry name" value="Single hybrid motif"/>
    <property type="match status" value="1"/>
</dbReference>
<dbReference type="PROSITE" id="PS50968">
    <property type="entry name" value="BIOTINYL_LIPOYL"/>
    <property type="match status" value="1"/>
</dbReference>
<feature type="chain" id="PRO_0000162259" description="Dihydrolipoyllysine-residue succinyltransferase component of 2-oxoglutarate dehydrogenase complex">
    <location>
        <begin position="1"/>
        <end position="420"/>
    </location>
</feature>
<feature type="domain" description="Lipoyl-binding" evidence="3">
    <location>
        <begin position="3"/>
        <end position="78"/>
    </location>
</feature>
<feature type="active site" evidence="2">
    <location>
        <position position="391"/>
    </location>
</feature>
<feature type="active site" evidence="2">
    <location>
        <position position="395"/>
    </location>
</feature>
<feature type="modified residue" description="N6-lipoyllysine" evidence="3">
    <location>
        <position position="44"/>
    </location>
</feature>
<proteinExistence type="inferred from homology"/>